<reference key="1">
    <citation type="journal article" date="2014" name="Stand. Genomic Sci.">
        <title>Complete genome sequence of Burkholderia phymatum STM815(T), a broad host range and efficient nitrogen-fixing symbiont of Mimosa species.</title>
        <authorList>
            <person name="Moulin L."/>
            <person name="Klonowska A."/>
            <person name="Caroline B."/>
            <person name="Booth K."/>
            <person name="Vriezen J.A."/>
            <person name="Melkonian R."/>
            <person name="James E.K."/>
            <person name="Young J.P."/>
            <person name="Bena G."/>
            <person name="Hauser L."/>
            <person name="Land M."/>
            <person name="Kyrpides N."/>
            <person name="Bruce D."/>
            <person name="Chain P."/>
            <person name="Copeland A."/>
            <person name="Pitluck S."/>
            <person name="Woyke T."/>
            <person name="Lizotte-Waniewski M."/>
            <person name="Bristow J."/>
            <person name="Riley M."/>
        </authorList>
    </citation>
    <scope>NUCLEOTIDE SEQUENCE [LARGE SCALE GENOMIC DNA]</scope>
    <source>
        <strain>DSM 17167 / CIP 108236 / LMG 21445 / STM815</strain>
    </source>
</reference>
<feature type="chain" id="PRO_1000143088" description="Small ribosomal subunit protein uS15">
    <location>
        <begin position="1"/>
        <end position="89"/>
    </location>
</feature>
<gene>
    <name evidence="1" type="primary">rpsO</name>
    <name type="ordered locus">Bphy_2014</name>
</gene>
<accession>B2JDN3</accession>
<organism>
    <name type="scientific">Paraburkholderia phymatum (strain DSM 17167 / CIP 108236 / LMG 21445 / STM815)</name>
    <name type="common">Burkholderia phymatum</name>
    <dbReference type="NCBI Taxonomy" id="391038"/>
    <lineage>
        <taxon>Bacteria</taxon>
        <taxon>Pseudomonadati</taxon>
        <taxon>Pseudomonadota</taxon>
        <taxon>Betaproteobacteria</taxon>
        <taxon>Burkholderiales</taxon>
        <taxon>Burkholderiaceae</taxon>
        <taxon>Paraburkholderia</taxon>
    </lineage>
</organism>
<dbReference type="EMBL" id="CP001043">
    <property type="protein sequence ID" value="ACC71193.1"/>
    <property type="molecule type" value="Genomic_DNA"/>
</dbReference>
<dbReference type="RefSeq" id="WP_012401401.1">
    <property type="nucleotide sequence ID" value="NC_010622.1"/>
</dbReference>
<dbReference type="SMR" id="B2JDN3"/>
<dbReference type="STRING" id="391038.Bphy_2014"/>
<dbReference type="KEGG" id="bph:Bphy_2014"/>
<dbReference type="eggNOG" id="COG0184">
    <property type="taxonomic scope" value="Bacteria"/>
</dbReference>
<dbReference type="HOGENOM" id="CLU_148518_0_0_4"/>
<dbReference type="OrthoDB" id="9799262at2"/>
<dbReference type="Proteomes" id="UP000001192">
    <property type="component" value="Chromosome 1"/>
</dbReference>
<dbReference type="GO" id="GO:0022627">
    <property type="term" value="C:cytosolic small ribosomal subunit"/>
    <property type="evidence" value="ECO:0007669"/>
    <property type="project" value="TreeGrafter"/>
</dbReference>
<dbReference type="GO" id="GO:0019843">
    <property type="term" value="F:rRNA binding"/>
    <property type="evidence" value="ECO:0007669"/>
    <property type="project" value="UniProtKB-UniRule"/>
</dbReference>
<dbReference type="GO" id="GO:0003735">
    <property type="term" value="F:structural constituent of ribosome"/>
    <property type="evidence" value="ECO:0007669"/>
    <property type="project" value="InterPro"/>
</dbReference>
<dbReference type="GO" id="GO:0006412">
    <property type="term" value="P:translation"/>
    <property type="evidence" value="ECO:0007669"/>
    <property type="project" value="UniProtKB-UniRule"/>
</dbReference>
<dbReference type="CDD" id="cd00353">
    <property type="entry name" value="Ribosomal_S15p_S13e"/>
    <property type="match status" value="1"/>
</dbReference>
<dbReference type="FunFam" id="1.10.287.10:FF:000002">
    <property type="entry name" value="30S ribosomal protein S15"/>
    <property type="match status" value="1"/>
</dbReference>
<dbReference type="Gene3D" id="6.10.250.3130">
    <property type="match status" value="1"/>
</dbReference>
<dbReference type="Gene3D" id="1.10.287.10">
    <property type="entry name" value="S15/NS1, RNA-binding"/>
    <property type="match status" value="1"/>
</dbReference>
<dbReference type="HAMAP" id="MF_01343_B">
    <property type="entry name" value="Ribosomal_uS15_B"/>
    <property type="match status" value="1"/>
</dbReference>
<dbReference type="InterPro" id="IPR000589">
    <property type="entry name" value="Ribosomal_uS15"/>
</dbReference>
<dbReference type="InterPro" id="IPR005290">
    <property type="entry name" value="Ribosomal_uS15_bac-type"/>
</dbReference>
<dbReference type="InterPro" id="IPR009068">
    <property type="entry name" value="uS15_NS1_RNA-bd_sf"/>
</dbReference>
<dbReference type="NCBIfam" id="TIGR00952">
    <property type="entry name" value="S15_bact"/>
    <property type="match status" value="1"/>
</dbReference>
<dbReference type="PANTHER" id="PTHR23321">
    <property type="entry name" value="RIBOSOMAL PROTEIN S15, BACTERIAL AND ORGANELLAR"/>
    <property type="match status" value="1"/>
</dbReference>
<dbReference type="PANTHER" id="PTHR23321:SF26">
    <property type="entry name" value="SMALL RIBOSOMAL SUBUNIT PROTEIN US15M"/>
    <property type="match status" value="1"/>
</dbReference>
<dbReference type="Pfam" id="PF00312">
    <property type="entry name" value="Ribosomal_S15"/>
    <property type="match status" value="1"/>
</dbReference>
<dbReference type="SMART" id="SM01387">
    <property type="entry name" value="Ribosomal_S15"/>
    <property type="match status" value="1"/>
</dbReference>
<dbReference type="SUPFAM" id="SSF47060">
    <property type="entry name" value="S15/NS1 RNA-binding domain"/>
    <property type="match status" value="1"/>
</dbReference>
<dbReference type="PROSITE" id="PS00362">
    <property type="entry name" value="RIBOSOMAL_S15"/>
    <property type="match status" value="1"/>
</dbReference>
<comment type="function">
    <text evidence="1">One of the primary rRNA binding proteins, it binds directly to 16S rRNA where it helps nucleate assembly of the platform of the 30S subunit by binding and bridging several RNA helices of the 16S rRNA.</text>
</comment>
<comment type="function">
    <text evidence="1">Forms an intersubunit bridge (bridge B4) with the 23S rRNA of the 50S subunit in the ribosome.</text>
</comment>
<comment type="subunit">
    <text evidence="1">Part of the 30S ribosomal subunit. Forms a bridge to the 50S subunit in the 70S ribosome, contacting the 23S rRNA.</text>
</comment>
<comment type="similarity">
    <text evidence="1">Belongs to the universal ribosomal protein uS15 family.</text>
</comment>
<proteinExistence type="inferred from homology"/>
<sequence>MSVAEIKKSDVVAQFARGANDTGSPEVQVALLTTRINELTVHFKAHTKDHHSRRGLLRMVSRRRKLLDYLKGKDADRYRALIEKLGLRK</sequence>
<evidence type="ECO:0000255" key="1">
    <source>
        <dbReference type="HAMAP-Rule" id="MF_01343"/>
    </source>
</evidence>
<evidence type="ECO:0000305" key="2"/>
<protein>
    <recommendedName>
        <fullName evidence="1">Small ribosomal subunit protein uS15</fullName>
    </recommendedName>
    <alternativeName>
        <fullName evidence="2">30S ribosomal protein S15</fullName>
    </alternativeName>
</protein>
<keyword id="KW-1185">Reference proteome</keyword>
<keyword id="KW-0687">Ribonucleoprotein</keyword>
<keyword id="KW-0689">Ribosomal protein</keyword>
<keyword id="KW-0694">RNA-binding</keyword>
<keyword id="KW-0699">rRNA-binding</keyword>
<name>RS15_PARP8</name>